<protein>
    <recommendedName>
        <fullName>WAS protein family homolog 2</fullName>
    </recommendedName>
    <alternativeName>
        <fullName>CXYorf1-like protein on chromosome 2</fullName>
    </alternativeName>
    <alternativeName>
        <fullName>Protein FAM39B</fullName>
    </alternativeName>
</protein>
<accession>Q6VEQ5</accession>
<organism>
    <name type="scientific">Homo sapiens</name>
    <name type="common">Human</name>
    <dbReference type="NCBI Taxonomy" id="9606"/>
    <lineage>
        <taxon>Eukaryota</taxon>
        <taxon>Metazoa</taxon>
        <taxon>Chordata</taxon>
        <taxon>Craniata</taxon>
        <taxon>Vertebrata</taxon>
        <taxon>Euteleostomi</taxon>
        <taxon>Mammalia</taxon>
        <taxon>Eutheria</taxon>
        <taxon>Euarchontoglires</taxon>
        <taxon>Primates</taxon>
        <taxon>Haplorrhini</taxon>
        <taxon>Catarrhini</taxon>
        <taxon>Hominidae</taxon>
        <taxon>Homo</taxon>
    </lineage>
</organism>
<reference key="1">
    <citation type="journal article" date="2005" name="Nature">
        <title>Generation and annotation of the DNA sequences of human chromosomes 2 and 4.</title>
        <authorList>
            <person name="Hillier L.W."/>
            <person name="Graves T.A."/>
            <person name="Fulton R.S."/>
            <person name="Fulton L.A."/>
            <person name="Pepin K.H."/>
            <person name="Minx P."/>
            <person name="Wagner-McPherson C."/>
            <person name="Layman D."/>
            <person name="Wylie K."/>
            <person name="Sekhon M."/>
            <person name="Becker M.C."/>
            <person name="Fewell G.A."/>
            <person name="Delehaunty K.D."/>
            <person name="Miner T.L."/>
            <person name="Nash W.E."/>
            <person name="Kremitzki C."/>
            <person name="Oddy L."/>
            <person name="Du H."/>
            <person name="Sun H."/>
            <person name="Bradshaw-Cordum H."/>
            <person name="Ali J."/>
            <person name="Carter J."/>
            <person name="Cordes M."/>
            <person name="Harris A."/>
            <person name="Isak A."/>
            <person name="van Brunt A."/>
            <person name="Nguyen C."/>
            <person name="Du F."/>
            <person name="Courtney L."/>
            <person name="Kalicki J."/>
            <person name="Ozersky P."/>
            <person name="Abbott S."/>
            <person name="Armstrong J."/>
            <person name="Belter E.A."/>
            <person name="Caruso L."/>
            <person name="Cedroni M."/>
            <person name="Cotton M."/>
            <person name="Davidson T."/>
            <person name="Desai A."/>
            <person name="Elliott G."/>
            <person name="Erb T."/>
            <person name="Fronick C."/>
            <person name="Gaige T."/>
            <person name="Haakenson W."/>
            <person name="Haglund K."/>
            <person name="Holmes A."/>
            <person name="Harkins R."/>
            <person name="Kim K."/>
            <person name="Kruchowski S.S."/>
            <person name="Strong C.M."/>
            <person name="Grewal N."/>
            <person name="Goyea E."/>
            <person name="Hou S."/>
            <person name="Levy A."/>
            <person name="Martinka S."/>
            <person name="Mead K."/>
            <person name="McLellan M.D."/>
            <person name="Meyer R."/>
            <person name="Randall-Maher J."/>
            <person name="Tomlinson C."/>
            <person name="Dauphin-Kohlberg S."/>
            <person name="Kozlowicz-Reilly A."/>
            <person name="Shah N."/>
            <person name="Swearengen-Shahid S."/>
            <person name="Snider J."/>
            <person name="Strong J.T."/>
            <person name="Thompson J."/>
            <person name="Yoakum M."/>
            <person name="Leonard S."/>
            <person name="Pearman C."/>
            <person name="Trani L."/>
            <person name="Radionenko M."/>
            <person name="Waligorski J.E."/>
            <person name="Wang C."/>
            <person name="Rock S.M."/>
            <person name="Tin-Wollam A.-M."/>
            <person name="Maupin R."/>
            <person name="Latreille P."/>
            <person name="Wendl M.C."/>
            <person name="Yang S.-P."/>
            <person name="Pohl C."/>
            <person name="Wallis J.W."/>
            <person name="Spieth J."/>
            <person name="Bieri T.A."/>
            <person name="Berkowicz N."/>
            <person name="Nelson J.O."/>
            <person name="Osborne J."/>
            <person name="Ding L."/>
            <person name="Meyer R."/>
            <person name="Sabo A."/>
            <person name="Shotland Y."/>
            <person name="Sinha P."/>
            <person name="Wohldmann P.E."/>
            <person name="Cook L.L."/>
            <person name="Hickenbotham M.T."/>
            <person name="Eldred J."/>
            <person name="Williams D."/>
            <person name="Jones T.A."/>
            <person name="She X."/>
            <person name="Ciccarelli F.D."/>
            <person name="Izaurralde E."/>
            <person name="Taylor J."/>
            <person name="Schmutz J."/>
            <person name="Myers R.M."/>
            <person name="Cox D.R."/>
            <person name="Huang X."/>
            <person name="McPherson J.D."/>
            <person name="Mardis E.R."/>
            <person name="Clifton S.W."/>
            <person name="Warren W.C."/>
            <person name="Chinwalla A.T."/>
            <person name="Eddy S.R."/>
            <person name="Marra M.A."/>
            <person name="Ovcharenko I."/>
            <person name="Furey T.S."/>
            <person name="Miller W."/>
            <person name="Eichler E.E."/>
            <person name="Bork P."/>
            <person name="Suyama M."/>
            <person name="Torrents D."/>
            <person name="Waterston R.H."/>
            <person name="Wilson R.K."/>
        </authorList>
    </citation>
    <scope>NUCLEOTIDE SEQUENCE [LARGE SCALE GENOMIC DNA]</scope>
</reference>
<reference key="2">
    <citation type="journal article" date="2004" name="Genomics">
        <title>Diverse fates of paralogs following segmental duplication of telomeric genes.</title>
        <authorList>
            <person name="Wong A."/>
            <person name="Vallender E.J."/>
            <person name="Heretis K."/>
            <person name="Ilkin Y."/>
            <person name="Lahn B.T."/>
            <person name="Lese Martin C."/>
            <person name="Ledbetter D.H."/>
        </authorList>
    </citation>
    <scope>NUCLEOTIDE SEQUENCE [MRNA] OF 202-465</scope>
    <scope>GENE DUPLICATION</scope>
</reference>
<reference key="3">
    <citation type="journal article" date="2000" name="Hum. Mol. Genet.">
        <title>Differentially regulated and evolved genes in the fully sequenced Xq/Yq pseudoautosomal region.</title>
        <authorList>
            <person name="Ciccodicola A."/>
            <person name="D'Esposito M."/>
            <person name="Esposito T."/>
            <person name="Gianfrancesco F."/>
            <person name="Migliaccio C."/>
            <person name="Miano M.G."/>
            <person name="Matarazzo M.R."/>
            <person name="Vacca M."/>
            <person name="Franze A."/>
            <person name="Cuccurese M."/>
            <person name="Cocchia M."/>
            <person name="Curci A."/>
            <person name="Terracciano A."/>
            <person name="Torino A."/>
            <person name="Cocchia S."/>
            <person name="Mercadante G."/>
            <person name="Pannone E."/>
            <person name="Archidiacono N."/>
            <person name="Rocchi M."/>
            <person name="Schlessinger D."/>
            <person name="D'Urso M."/>
        </authorList>
    </citation>
    <scope>GENE DUPLICATION</scope>
</reference>
<reference key="4">
    <citation type="journal article" date="2007" name="PLoS Genet.">
        <title>Human subtelomeric WASH genes encode a new subclass of the WASP family.</title>
        <authorList>
            <person name="Linardopoulou E.V."/>
            <person name="Parghi S.S."/>
            <person name="Friedman C."/>
            <person name="Osborn G.E."/>
            <person name="Parkhurst S.M."/>
            <person name="Trask B.J."/>
        </authorList>
    </citation>
    <scope>GENE DUPLICATION</scope>
</reference>
<proteinExistence type="evidence at transcript level"/>
<evidence type="ECO:0000250" key="1">
    <source>
        <dbReference type="UniProtKB" id="A8K0Z3"/>
    </source>
</evidence>
<evidence type="ECO:0000250" key="2">
    <source>
        <dbReference type="UniProtKB" id="C4AMC7"/>
    </source>
</evidence>
<evidence type="ECO:0000250" key="3">
    <source>
        <dbReference type="UniProtKB" id="Q8VDD8"/>
    </source>
</evidence>
<evidence type="ECO:0000255" key="4">
    <source>
        <dbReference type="PROSITE-ProRule" id="PRU00406"/>
    </source>
</evidence>
<evidence type="ECO:0000256" key="5">
    <source>
        <dbReference type="SAM" id="MobiDB-lite"/>
    </source>
</evidence>
<evidence type="ECO:0000305" key="6"/>
<evidence type="ECO:0000305" key="7">
    <source>
    </source>
</evidence>
<dbReference type="EMBL" id="AL078621">
    <property type="status" value="NOT_ANNOTATED_CDS"/>
    <property type="molecule type" value="Genomic_DNA"/>
</dbReference>
<dbReference type="EMBL" id="AY341936">
    <property type="protein sequence ID" value="AAQ76875.1"/>
    <property type="molecule type" value="mRNA"/>
</dbReference>
<dbReference type="SMR" id="Q6VEQ5"/>
<dbReference type="ComplexPortal" id="CPX-1168">
    <property type="entry name" value="WASH complex, variant WASH2P/WASHC2C"/>
</dbReference>
<dbReference type="ComplexPortal" id="CPX-1173">
    <property type="entry name" value="WASH complex, variant WASH2P/WASHC2A"/>
</dbReference>
<dbReference type="FunCoup" id="Q6VEQ5">
    <property type="interactions" value="149"/>
</dbReference>
<dbReference type="IntAct" id="Q6VEQ5">
    <property type="interactions" value="11"/>
</dbReference>
<dbReference type="MINT" id="Q6VEQ5"/>
<dbReference type="iPTMnet" id="Q6VEQ5"/>
<dbReference type="PhosphoSitePlus" id="Q6VEQ5"/>
<dbReference type="BioMuta" id="HGNC:33145"/>
<dbReference type="DMDM" id="284018148"/>
<dbReference type="jPOST" id="Q6VEQ5"/>
<dbReference type="MassIVE" id="Q6VEQ5"/>
<dbReference type="PaxDb" id="9606-ENSP00000485442"/>
<dbReference type="PeptideAtlas" id="Q6VEQ5"/>
<dbReference type="Pumba" id="Q6VEQ5"/>
<dbReference type="AGR" id="HGNC:33145"/>
<dbReference type="GeneCards" id="WASH2P"/>
<dbReference type="HGNC" id="HGNC:33145">
    <property type="gene designation" value="WASH2P"/>
</dbReference>
<dbReference type="neXtProt" id="NX_Q6VEQ5"/>
<dbReference type="eggNOG" id="KOG1366">
    <property type="taxonomic scope" value="Eukaryota"/>
</dbReference>
<dbReference type="InParanoid" id="Q6VEQ5"/>
<dbReference type="PAN-GO" id="Q6VEQ5">
    <property type="GO annotations" value="9 GO annotations based on evolutionary models"/>
</dbReference>
<dbReference type="PhylomeDB" id="Q6VEQ5"/>
<dbReference type="PathwayCommons" id="Q6VEQ5"/>
<dbReference type="SignaLink" id="Q6VEQ5"/>
<dbReference type="ChiTaRS" id="WASH2P">
    <property type="organism name" value="human"/>
</dbReference>
<dbReference type="Pharos" id="Q6VEQ5">
    <property type="development level" value="Tdark"/>
</dbReference>
<dbReference type="PRO" id="PR:Q6VEQ5"/>
<dbReference type="Proteomes" id="UP000005640">
    <property type="component" value="Unplaced"/>
</dbReference>
<dbReference type="RNAct" id="Q6VEQ5">
    <property type="molecule type" value="protein"/>
</dbReference>
<dbReference type="GO" id="GO:0005776">
    <property type="term" value="C:autophagosome"/>
    <property type="evidence" value="ECO:0007669"/>
    <property type="project" value="UniProtKB-SubCell"/>
</dbReference>
<dbReference type="GO" id="GO:0005814">
    <property type="term" value="C:centriole"/>
    <property type="evidence" value="ECO:0007669"/>
    <property type="project" value="UniProtKB-SubCell"/>
</dbReference>
<dbReference type="GO" id="GO:0005829">
    <property type="term" value="C:cytosol"/>
    <property type="evidence" value="ECO:0007669"/>
    <property type="project" value="GOC"/>
</dbReference>
<dbReference type="GO" id="GO:0005769">
    <property type="term" value="C:early endosome"/>
    <property type="evidence" value="ECO:0000250"/>
    <property type="project" value="UniProtKB"/>
</dbReference>
<dbReference type="GO" id="GO:0031901">
    <property type="term" value="C:early endosome membrane"/>
    <property type="evidence" value="ECO:0000303"/>
    <property type="project" value="ComplexPortal"/>
</dbReference>
<dbReference type="GO" id="GO:0005770">
    <property type="term" value="C:late endosome"/>
    <property type="evidence" value="ECO:0007669"/>
    <property type="project" value="UniProtKB-SubCell"/>
</dbReference>
<dbReference type="GO" id="GO:0055037">
    <property type="term" value="C:recycling endosome"/>
    <property type="evidence" value="ECO:0000250"/>
    <property type="project" value="UniProtKB"/>
</dbReference>
<dbReference type="GO" id="GO:0055038">
    <property type="term" value="C:recycling endosome membrane"/>
    <property type="evidence" value="ECO:0007669"/>
    <property type="project" value="UniProtKB-SubCell"/>
</dbReference>
<dbReference type="GO" id="GO:0071203">
    <property type="term" value="C:WASH complex"/>
    <property type="evidence" value="ECO:0000250"/>
    <property type="project" value="UniProtKB"/>
</dbReference>
<dbReference type="GO" id="GO:0003779">
    <property type="term" value="F:actin binding"/>
    <property type="evidence" value="ECO:0007669"/>
    <property type="project" value="UniProtKB-KW"/>
</dbReference>
<dbReference type="GO" id="GO:0043014">
    <property type="term" value="F:alpha-tubulin binding"/>
    <property type="evidence" value="ECO:0000250"/>
    <property type="project" value="UniProtKB"/>
</dbReference>
<dbReference type="GO" id="GO:0043015">
    <property type="term" value="F:gamma-tubulin binding"/>
    <property type="evidence" value="ECO:0000318"/>
    <property type="project" value="GO_Central"/>
</dbReference>
<dbReference type="GO" id="GO:0034314">
    <property type="term" value="P:Arp2/3 complex-mediated actin nucleation"/>
    <property type="evidence" value="ECO:0000250"/>
    <property type="project" value="UniProtKB"/>
</dbReference>
<dbReference type="GO" id="GO:0032456">
    <property type="term" value="P:endocytic recycling"/>
    <property type="evidence" value="ECO:0000318"/>
    <property type="project" value="GO_Central"/>
</dbReference>
<dbReference type="GO" id="GO:0016197">
    <property type="term" value="P:endosomal transport"/>
    <property type="evidence" value="ECO:0000250"/>
    <property type="project" value="UniProtKB"/>
</dbReference>
<dbReference type="GO" id="GO:0006887">
    <property type="term" value="P:exocytosis"/>
    <property type="evidence" value="ECO:0000318"/>
    <property type="project" value="GO_Central"/>
</dbReference>
<dbReference type="GO" id="GO:0015031">
    <property type="term" value="P:protein transport"/>
    <property type="evidence" value="ECO:0007669"/>
    <property type="project" value="UniProtKB-KW"/>
</dbReference>
<dbReference type="GO" id="GO:0034315">
    <property type="term" value="P:regulation of Arp2/3 complex-mediated actin nucleation"/>
    <property type="evidence" value="ECO:0000303"/>
    <property type="project" value="ComplexPortal"/>
</dbReference>
<dbReference type="GO" id="GO:0042147">
    <property type="term" value="P:retrograde transport, endosome to Golgi"/>
    <property type="evidence" value="ECO:0000250"/>
    <property type="project" value="UniProtKB"/>
</dbReference>
<dbReference type="InterPro" id="IPR028290">
    <property type="entry name" value="WASH1"/>
</dbReference>
<dbReference type="InterPro" id="IPR021854">
    <property type="entry name" value="WASH1_WAHD"/>
</dbReference>
<dbReference type="InterPro" id="IPR003124">
    <property type="entry name" value="WH2_dom"/>
</dbReference>
<dbReference type="PANTHER" id="PTHR23331">
    <property type="entry name" value="CXYORF1"/>
    <property type="match status" value="1"/>
</dbReference>
<dbReference type="PANTHER" id="PTHR23331:SF5">
    <property type="entry name" value="WAS PROTEIN FAMILY HOMOLOG 2-RELATED"/>
    <property type="match status" value="1"/>
</dbReference>
<dbReference type="Pfam" id="PF11945">
    <property type="entry name" value="WASH_WAHD"/>
    <property type="match status" value="1"/>
</dbReference>
<dbReference type="PROSITE" id="PS51082">
    <property type="entry name" value="WH2"/>
    <property type="match status" value="1"/>
</dbReference>
<keyword id="KW-0009">Actin-binding</keyword>
<keyword id="KW-0963">Cytoplasm</keyword>
<keyword id="KW-0968">Cytoplasmic vesicle</keyword>
<keyword id="KW-0206">Cytoskeleton</keyword>
<keyword id="KW-0967">Endosome</keyword>
<keyword id="KW-1017">Isopeptide bond</keyword>
<keyword id="KW-0472">Membrane</keyword>
<keyword id="KW-0653">Protein transport</keyword>
<keyword id="KW-1185">Reference proteome</keyword>
<keyword id="KW-0813">Transport</keyword>
<keyword id="KW-0832">Ubl conjugation</keyword>
<feature type="chain" id="PRO_0000257971" description="WAS protein family homolog 2">
    <location>
        <begin position="1"/>
        <end position="465"/>
    </location>
</feature>
<feature type="domain" description="WH2" evidence="4">
    <location>
        <begin position="361"/>
        <end position="383"/>
    </location>
</feature>
<feature type="region of interest" description="WHD1">
    <location>
        <begin position="1"/>
        <end position="167"/>
    </location>
</feature>
<feature type="region of interest" description="Required for WASH complex assembly" evidence="2">
    <location>
        <begin position="1"/>
        <end position="54"/>
    </location>
</feature>
<feature type="region of interest" description="Disordered" evidence="5">
    <location>
        <begin position="297"/>
        <end position="407"/>
    </location>
</feature>
<feature type="region of interest" description="VCA" evidence="2">
    <location>
        <begin position="349"/>
        <end position="465"/>
    </location>
</feature>
<feature type="region of interest" description="Disordered" evidence="5">
    <location>
        <begin position="422"/>
        <end position="465"/>
    </location>
</feature>
<feature type="compositionally biased region" description="Pro residues" evidence="5">
    <location>
        <begin position="302"/>
        <end position="314"/>
    </location>
</feature>
<feature type="compositionally biased region" description="Basic and acidic residues" evidence="5">
    <location>
        <begin position="382"/>
        <end position="398"/>
    </location>
</feature>
<feature type="compositionally biased region" description="Gly residues" evidence="5">
    <location>
        <begin position="424"/>
        <end position="436"/>
    </location>
</feature>
<feature type="compositionally biased region" description="Acidic residues" evidence="5">
    <location>
        <begin position="456"/>
        <end position="465"/>
    </location>
</feature>
<feature type="cross-link" description="Glycyl lysine isopeptide (Lys-Gly) (interchain with G-Cter in ubiquitin)" evidence="1">
    <location>
        <position position="220"/>
    </location>
</feature>
<sequence>MTPVRMQHSLAGQTYAVPLIQPDLRREEAVQQMADALQYLQKVSGDIFSRISQQVEQSRSQVQAIGEKVSLAQAKIEKIKGSKKAIKVFSSAKYPAPERLQEYGSIFTGAQDPGLQRRPRHRIQSKHRPLDERALQEKLKDFPVCVSTKPEPEDDAEEGLGGLPSNISSVSSLLLFNTTENLYKKYVFLDPLAGAVTKTHVMLGAETEEKLFDAPLSISKREQLEQQVPENYFYVPDLGQVPEIDVPSYLPDLPGIANDLMYIADLGPGIAPSAPGTIPELPTFHTEVAEPLKVDLQDGVLTPPPPPPPPPPAPEVLASAPPLPPSTAAPVGQGARQDDSSSSASPSVQGAPREVVDPSGGRATLLESIRQAGGIGKAKLRSMKERKLEKKKQKEQEQVRATSQGGHLMSDLFNKLVMRRKGISGKGPGAGEGPGGAFARVSDSIPPLPPPQQPQAEEDEDDWES</sequence>
<comment type="function">
    <text evidence="1 2 3">Acts as a nucleation-promoting factor at the surface of endosomes, where it recruits and activates the Arp2/3 complex to induce actin polymerization, playing a key role in the fission of tubules that serve as transport intermediates during endosome sorting. Involved in endocytic trafficking of EGF. Involved in transferrin receptor recycling. Regulates the trafficking of endosomal alpha5beta1 integrin to the plasma membrane and involved in invasive cell migration. In T-cells involved in endosome-to-membrane recycling of receptors including T-cell receptor (TCR), CD28 and ITGAL; proposed to be implicated in T-cell proliferation and effector function. In dendritic cells involved in endosome-to-membrane recycling of major histocompatibility complex (MHC) class II probably involving retromer and subsequently allowing antigen sampling, loading and presentation during T-cell activation. Involved in Arp2/3 complex-dependent actin assembly driving Salmonella typhimurium invasion independent of ruffling. Involved in the exocytosis of MMP14 leading to matrix remodeling during invasive migration and implicating late endosome-to-plasma membrane tubular connections and cooperation with the exocyst complex. Involved in negative regulation of autophagy independently from its role in endosomal sorting by inhibiting BECN1 ubiquitination to inactivate PIK3C3/Vps34 activity (By similarity).</text>
</comment>
<comment type="subunit">
    <text evidence="1 2 3">Component of the WASH core complex also described as WASH regulatory complex (SHRC) composed of WASH (WASHC1, WASH2P or WASH3P), WASHC2 (WASHC2A or WASHC2C), WASHC3, WASHC4 and WASHC5. The WASH core complex associates with the F-actin-capping protein dimer (formed by CAPZA1, CAPZA2 or CAPZA3 and CAPZB) in a transient or substoichiometric manner which was initially described as WASH complex. Interacts (via WHD1 region) with WASHC2C; the interaction is direct. Interacts with alpha-tubulin. Interacts with BECN1; WASHC1 and AMBRA1 can competitively interact with BECN1. Interacts with BLOC1S2; may associate with the BLOC-1 complex. Interacts with tubulin gamma chain (TUBG1 or TUBG2). Interacts with EXOC1, EXOC4, EXOC8; in MMP14-positive endosomes in breast tumor cells; indicative for an association with the exocyst complex (By similarity).</text>
</comment>
<comment type="subcellular location">
    <subcellularLocation>
        <location evidence="1">Early endosome membrane</location>
    </subcellularLocation>
    <subcellularLocation>
        <location evidence="3">Recycling endosome membrane</location>
    </subcellularLocation>
    <subcellularLocation>
        <location evidence="1">Late endosome</location>
    </subcellularLocation>
    <subcellularLocation>
        <location evidence="3">Cytoplasmic vesicle</location>
        <location evidence="3">Autophagosome</location>
    </subcellularLocation>
    <subcellularLocation>
        <location evidence="3">Cytoplasm</location>
        <location evidence="3">Cytoskeleton</location>
        <location evidence="3">Microtubule organizing center</location>
        <location evidence="3">Centrosome</location>
        <location evidence="3">Centriole</location>
    </subcellularLocation>
    <text evidence="1">Localization to the endosome membrane is mediated via its interaction with WASHC2.</text>
</comment>
<comment type="domain">
    <text evidence="2">The VCA (verprolin, cofilin, acidic) domain promotes actin polymerization by the Arp2/3 complex in vitro.</text>
</comment>
<comment type="miscellaneous">
    <text evidence="7">WASH genes duplicated to multiple chromosomal ends during primate evolution, with highest copy number reached in humans, whose WASH repertoires probably vary extensively among individuals (PubMed:18159949). It is therefore difficult to determine which gene is functional or not. The telomeric region of chromosome 9p is paralogous to the pericentromeric regions of chromosome 9 as well as to 2q. Paralogous regions contain 7 transcriptional units. Duplicated WASH genes are also present in the Xq/Yq pseudoautosomal region, as well as on chromosome 1 and 15. The chromosome 16 copy seems to be a pseudogene.</text>
</comment>
<comment type="similarity">
    <text evidence="6">Belongs to the WASH1 family.</text>
</comment>
<comment type="sequence caution" evidence="6">
    <conflict type="erroneous termination">
        <sequence resource="EMBL" id="AL078621"/>
    </conflict>
    <text>Truncated C-terminus.</text>
</comment>
<name>WASH2_HUMAN</name>
<gene>
    <name type="primary">WASH2P</name>
    <name type="synonym">FAM39B</name>
</gene>